<reference key="1">
    <citation type="journal article" date="2000" name="Nature">
        <title>Complete DNA sequence of a serogroup A strain of Neisseria meningitidis Z2491.</title>
        <authorList>
            <person name="Parkhill J."/>
            <person name="Achtman M."/>
            <person name="James K.D."/>
            <person name="Bentley S.D."/>
            <person name="Churcher C.M."/>
            <person name="Klee S.R."/>
            <person name="Morelli G."/>
            <person name="Basham D."/>
            <person name="Brown D."/>
            <person name="Chillingworth T."/>
            <person name="Davies R.M."/>
            <person name="Davis P."/>
            <person name="Devlin K."/>
            <person name="Feltwell T."/>
            <person name="Hamlin N."/>
            <person name="Holroyd S."/>
            <person name="Jagels K."/>
            <person name="Leather S."/>
            <person name="Moule S."/>
            <person name="Mungall K.L."/>
            <person name="Quail M.A."/>
            <person name="Rajandream M.A."/>
            <person name="Rutherford K.M."/>
            <person name="Simmonds M."/>
            <person name="Skelton J."/>
            <person name="Whitehead S."/>
            <person name="Spratt B.G."/>
            <person name="Barrell B.G."/>
        </authorList>
    </citation>
    <scope>NUCLEOTIDE SEQUENCE [LARGE SCALE GENOMIC DNA]</scope>
    <source>
        <strain>DSM 15465 / Z2491</strain>
    </source>
</reference>
<gene>
    <name evidence="1" type="primary">rpoC</name>
    <name type="ordered locus">NMA0141</name>
</gene>
<protein>
    <recommendedName>
        <fullName evidence="1">DNA-directed RNA polymerase subunit beta'</fullName>
        <shortName evidence="1">RNAP subunit beta'</shortName>
        <ecNumber evidence="1">2.7.7.6</ecNumber>
    </recommendedName>
    <alternativeName>
        <fullName evidence="1">RNA polymerase subunit beta'</fullName>
    </alternativeName>
    <alternativeName>
        <fullName evidence="1">Transcriptase subunit beta'</fullName>
    </alternativeName>
</protein>
<proteinExistence type="inferred from homology"/>
<dbReference type="EC" id="2.7.7.6" evidence="1"/>
<dbReference type="EMBL" id="AL157959">
    <property type="protein sequence ID" value="CAM07459.1"/>
    <property type="molecule type" value="Genomic_DNA"/>
</dbReference>
<dbReference type="PIR" id="C82007">
    <property type="entry name" value="C82007"/>
</dbReference>
<dbReference type="RefSeq" id="WP_010981051.1">
    <property type="nucleotide sequence ID" value="NC_003116.1"/>
</dbReference>
<dbReference type="SMR" id="Q9JX03"/>
<dbReference type="EnsemblBacteria" id="CAM07459">
    <property type="protein sequence ID" value="CAM07459"/>
    <property type="gene ID" value="NMA0141"/>
</dbReference>
<dbReference type="GeneID" id="93387208"/>
<dbReference type="KEGG" id="nma:NMA0141"/>
<dbReference type="HOGENOM" id="CLU_000524_3_1_4"/>
<dbReference type="Proteomes" id="UP000000626">
    <property type="component" value="Chromosome"/>
</dbReference>
<dbReference type="GO" id="GO:0000428">
    <property type="term" value="C:DNA-directed RNA polymerase complex"/>
    <property type="evidence" value="ECO:0007669"/>
    <property type="project" value="UniProtKB-KW"/>
</dbReference>
<dbReference type="GO" id="GO:0003677">
    <property type="term" value="F:DNA binding"/>
    <property type="evidence" value="ECO:0007669"/>
    <property type="project" value="UniProtKB-UniRule"/>
</dbReference>
<dbReference type="GO" id="GO:0003899">
    <property type="term" value="F:DNA-directed RNA polymerase activity"/>
    <property type="evidence" value="ECO:0007669"/>
    <property type="project" value="UniProtKB-UniRule"/>
</dbReference>
<dbReference type="GO" id="GO:0000287">
    <property type="term" value="F:magnesium ion binding"/>
    <property type="evidence" value="ECO:0007669"/>
    <property type="project" value="UniProtKB-UniRule"/>
</dbReference>
<dbReference type="GO" id="GO:0008270">
    <property type="term" value="F:zinc ion binding"/>
    <property type="evidence" value="ECO:0007669"/>
    <property type="project" value="UniProtKB-UniRule"/>
</dbReference>
<dbReference type="GO" id="GO:0006351">
    <property type="term" value="P:DNA-templated transcription"/>
    <property type="evidence" value="ECO:0007669"/>
    <property type="project" value="UniProtKB-UniRule"/>
</dbReference>
<dbReference type="CDD" id="cd02655">
    <property type="entry name" value="RNAP_beta'_C"/>
    <property type="match status" value="1"/>
</dbReference>
<dbReference type="CDD" id="cd01609">
    <property type="entry name" value="RNAP_beta'_N"/>
    <property type="match status" value="1"/>
</dbReference>
<dbReference type="FunFam" id="1.10.132.30:FF:000003">
    <property type="entry name" value="DNA-directed RNA polymerase subunit beta"/>
    <property type="match status" value="1"/>
</dbReference>
<dbReference type="FunFam" id="1.10.150.390:FF:000002">
    <property type="entry name" value="DNA-directed RNA polymerase subunit beta"/>
    <property type="match status" value="1"/>
</dbReference>
<dbReference type="FunFam" id="4.10.860.120:FF:000001">
    <property type="entry name" value="DNA-directed RNA polymerase subunit beta"/>
    <property type="match status" value="1"/>
</dbReference>
<dbReference type="Gene3D" id="1.10.132.30">
    <property type="match status" value="1"/>
</dbReference>
<dbReference type="Gene3D" id="1.10.150.390">
    <property type="match status" value="1"/>
</dbReference>
<dbReference type="Gene3D" id="1.10.1790.20">
    <property type="match status" value="1"/>
</dbReference>
<dbReference type="Gene3D" id="1.10.40.90">
    <property type="match status" value="1"/>
</dbReference>
<dbReference type="Gene3D" id="2.40.40.20">
    <property type="match status" value="1"/>
</dbReference>
<dbReference type="Gene3D" id="2.40.50.100">
    <property type="match status" value="3"/>
</dbReference>
<dbReference type="Gene3D" id="4.10.860.120">
    <property type="entry name" value="RNA polymerase II, clamp domain"/>
    <property type="match status" value="1"/>
</dbReference>
<dbReference type="Gene3D" id="1.10.274.100">
    <property type="entry name" value="RNA polymerase Rpb1, domain 3"/>
    <property type="match status" value="1"/>
</dbReference>
<dbReference type="HAMAP" id="MF_01322">
    <property type="entry name" value="RNApol_bact_RpoC"/>
    <property type="match status" value="1"/>
</dbReference>
<dbReference type="InterPro" id="IPR045867">
    <property type="entry name" value="DNA-dir_RpoC_beta_prime"/>
</dbReference>
<dbReference type="InterPro" id="IPR012754">
    <property type="entry name" value="DNA-dir_RpoC_beta_prime_bact"/>
</dbReference>
<dbReference type="InterPro" id="IPR000722">
    <property type="entry name" value="RNA_pol_asu"/>
</dbReference>
<dbReference type="InterPro" id="IPR006592">
    <property type="entry name" value="RNA_pol_N"/>
</dbReference>
<dbReference type="InterPro" id="IPR007080">
    <property type="entry name" value="RNA_pol_Rpb1_1"/>
</dbReference>
<dbReference type="InterPro" id="IPR007066">
    <property type="entry name" value="RNA_pol_Rpb1_3"/>
</dbReference>
<dbReference type="InterPro" id="IPR042102">
    <property type="entry name" value="RNA_pol_Rpb1_3_sf"/>
</dbReference>
<dbReference type="InterPro" id="IPR007083">
    <property type="entry name" value="RNA_pol_Rpb1_4"/>
</dbReference>
<dbReference type="InterPro" id="IPR007081">
    <property type="entry name" value="RNA_pol_Rpb1_5"/>
</dbReference>
<dbReference type="InterPro" id="IPR044893">
    <property type="entry name" value="RNA_pol_Rpb1_clamp_domain"/>
</dbReference>
<dbReference type="InterPro" id="IPR038120">
    <property type="entry name" value="Rpb1_funnel_sf"/>
</dbReference>
<dbReference type="NCBIfam" id="TIGR02386">
    <property type="entry name" value="rpoC_TIGR"/>
    <property type="match status" value="1"/>
</dbReference>
<dbReference type="PANTHER" id="PTHR19376">
    <property type="entry name" value="DNA-DIRECTED RNA POLYMERASE"/>
    <property type="match status" value="1"/>
</dbReference>
<dbReference type="PANTHER" id="PTHR19376:SF54">
    <property type="entry name" value="DNA-DIRECTED RNA POLYMERASE SUBUNIT BETA"/>
    <property type="match status" value="1"/>
</dbReference>
<dbReference type="Pfam" id="PF04997">
    <property type="entry name" value="RNA_pol_Rpb1_1"/>
    <property type="match status" value="1"/>
</dbReference>
<dbReference type="Pfam" id="PF00623">
    <property type="entry name" value="RNA_pol_Rpb1_2"/>
    <property type="match status" value="2"/>
</dbReference>
<dbReference type="Pfam" id="PF04983">
    <property type="entry name" value="RNA_pol_Rpb1_3"/>
    <property type="match status" value="1"/>
</dbReference>
<dbReference type="Pfam" id="PF05000">
    <property type="entry name" value="RNA_pol_Rpb1_4"/>
    <property type="match status" value="1"/>
</dbReference>
<dbReference type="Pfam" id="PF04998">
    <property type="entry name" value="RNA_pol_Rpb1_5"/>
    <property type="match status" value="1"/>
</dbReference>
<dbReference type="SMART" id="SM00663">
    <property type="entry name" value="RPOLA_N"/>
    <property type="match status" value="1"/>
</dbReference>
<dbReference type="SUPFAM" id="SSF64484">
    <property type="entry name" value="beta and beta-prime subunits of DNA dependent RNA-polymerase"/>
    <property type="match status" value="1"/>
</dbReference>
<evidence type="ECO:0000255" key="1">
    <source>
        <dbReference type="HAMAP-Rule" id="MF_01322"/>
    </source>
</evidence>
<name>RPOC_NEIMA</name>
<feature type="chain" id="PRO_0000067767" description="DNA-directed RNA polymerase subunit beta'">
    <location>
        <begin position="1"/>
        <end position="1391"/>
    </location>
</feature>
<feature type="binding site" evidence="1">
    <location>
        <position position="72"/>
    </location>
    <ligand>
        <name>Zn(2+)</name>
        <dbReference type="ChEBI" id="CHEBI:29105"/>
        <label>1</label>
    </ligand>
</feature>
<feature type="binding site" evidence="1">
    <location>
        <position position="74"/>
    </location>
    <ligand>
        <name>Zn(2+)</name>
        <dbReference type="ChEBI" id="CHEBI:29105"/>
        <label>1</label>
    </ligand>
</feature>
<feature type="binding site" evidence="1">
    <location>
        <position position="87"/>
    </location>
    <ligand>
        <name>Zn(2+)</name>
        <dbReference type="ChEBI" id="CHEBI:29105"/>
        <label>1</label>
    </ligand>
</feature>
<feature type="binding site" evidence="1">
    <location>
        <position position="90"/>
    </location>
    <ligand>
        <name>Zn(2+)</name>
        <dbReference type="ChEBI" id="CHEBI:29105"/>
        <label>1</label>
    </ligand>
</feature>
<feature type="binding site" evidence="1">
    <location>
        <position position="462"/>
    </location>
    <ligand>
        <name>Mg(2+)</name>
        <dbReference type="ChEBI" id="CHEBI:18420"/>
    </ligand>
</feature>
<feature type="binding site" evidence="1">
    <location>
        <position position="464"/>
    </location>
    <ligand>
        <name>Mg(2+)</name>
        <dbReference type="ChEBI" id="CHEBI:18420"/>
    </ligand>
</feature>
<feature type="binding site" evidence="1">
    <location>
        <position position="466"/>
    </location>
    <ligand>
        <name>Mg(2+)</name>
        <dbReference type="ChEBI" id="CHEBI:18420"/>
    </ligand>
</feature>
<feature type="binding site" evidence="1">
    <location>
        <position position="816"/>
    </location>
    <ligand>
        <name>Zn(2+)</name>
        <dbReference type="ChEBI" id="CHEBI:29105"/>
        <label>2</label>
    </ligand>
</feature>
<feature type="binding site" evidence="1">
    <location>
        <position position="890"/>
    </location>
    <ligand>
        <name>Zn(2+)</name>
        <dbReference type="ChEBI" id="CHEBI:29105"/>
        <label>2</label>
    </ligand>
</feature>
<feature type="binding site" evidence="1">
    <location>
        <position position="897"/>
    </location>
    <ligand>
        <name>Zn(2+)</name>
        <dbReference type="ChEBI" id="CHEBI:29105"/>
        <label>2</label>
    </ligand>
</feature>
<feature type="binding site" evidence="1">
    <location>
        <position position="900"/>
    </location>
    <ligand>
        <name>Zn(2+)</name>
        <dbReference type="ChEBI" id="CHEBI:29105"/>
        <label>2</label>
    </ligand>
</feature>
<accession>Q9JX03</accession>
<accession>A1IP02</accession>
<organism>
    <name type="scientific">Neisseria meningitidis serogroup A / serotype 4A (strain DSM 15465 / Z2491)</name>
    <dbReference type="NCBI Taxonomy" id="122587"/>
    <lineage>
        <taxon>Bacteria</taxon>
        <taxon>Pseudomonadati</taxon>
        <taxon>Pseudomonadota</taxon>
        <taxon>Betaproteobacteria</taxon>
        <taxon>Neisseriales</taxon>
        <taxon>Neisseriaceae</taxon>
        <taxon>Neisseria</taxon>
    </lineage>
</organism>
<keyword id="KW-0240">DNA-directed RNA polymerase</keyword>
<keyword id="KW-0460">Magnesium</keyword>
<keyword id="KW-0479">Metal-binding</keyword>
<keyword id="KW-0548">Nucleotidyltransferase</keyword>
<keyword id="KW-0804">Transcription</keyword>
<keyword id="KW-0808">Transferase</keyword>
<keyword id="KW-0862">Zinc</keyword>
<sequence>MNLLNLFNPLQTAGMEEEFDAIKIGIASPETIRSWSYGEVKKPETINYRTFKPERDGLFCAKIFGPVKDYECLCGKYKRLKFKGVTCEKCGVEVTLSKVRRERMGHIELAAPVAHIWFLKSLPSRLGMVLDMTLRDIERVLYFEAFVVTDPGMTPLQRRQLLTEDDYYNKLDEYGDDFDAKMGAEGIRELLRTLNVAGEIEILRQELESTGSDTKIKKIAKRLKVLEAFHRSGMKLEWMIMDVLPVLPPDLRPLVPLDGGRFATSDLNDLYRRVINRNNRLKRLLELHAPDIIVRNEKRMLQEAVDSLLDNGRRGKAMTGANKRPLKSLADMIKGKGGRFRQNLLGKRVDYSGRSVITVGPYLRLHQCGLPKKMALELFKPFIFHKLEKQGLASTVKAAKKLVEQEVPEVWDILEEVIREHPIMLNRAPTLHRLGIQAFEPILIEGKAIQLHPLVCAAFNADFDGDQMAVHVPLSLEAQMEARTLMLASNNVLSPANGEPIIVPSQDIVLGLYYMTRDRINAKGEGSLFADVKEVHRAYHTKQVELGTKITVRLREWVKNEAGEFEPVVNRYETTVGRALLSEILPKGLPFEYVNKALKKKEISKLINASFRLCGLRDTVIFADHLMYTGFGFAAKGGISIAVDDMEIPKEKAALLAEANAEVKEIEDQYRQGLVTNGERYNKVVDIWGRAGDKIAKAMMDNLSKQKVIDRDGNEVDQESFNSIYMMADSGARGSAAQIKQLSGMRGLMAKPDGSIIETPITSNFREGLTVLQYFIATHGARKGLADTALKTANSGYLTRRLVDVTQDLVVVEDDCGTSDGFVMKAVVQGGDVIEALRDRILGRVTASDVVDPSSGETLVEAGTLLTEKLVDMIDQSGVDEVKVRTPITCKTRHGLCAHCYGRDLARGKLVNAGEAVGVIAAQSIGEPGTQLTMRTFHIGGAASRAAAASQVEAKSNGTARFSSQMRYVANNKGELVVIGRSCEVVIHDDIGRERERHKVPYGAILLVQDGMAIKAGQTLATWDPHTRPMITEHAGMVKFENVEEGVTVAKQTDDVTGLSTLVVIDGKRRSSSASKLLRPTVKLLDENGVEICIPGTSTPVSMAFPVGAVITVREGQEIGKGDVLARIPQASSKTRDITGGLPRVAELFEARVPKDAGMLAEITGTVSFGKETKGKQRLIVTDVDGVAYETLISKEKQILVHDGQVVNRGETIVDGAVDPHDILRLQGIEALARYIVQEVQEVYRLQGVKISDKHIEVIIRQMLRRVNIADAGETGFITGEQVERGDVMAANEKALEEGKEPARYENVLLGITKASLSTDSFISAASFQETTRVLTEAAIMGKQDELRGLKENVIVGRLIPAGTGLTYHRSRHQQWQGVEQETAETQVTDE</sequence>
<comment type="function">
    <text evidence="1">DNA-dependent RNA polymerase catalyzes the transcription of DNA into RNA using the four ribonucleoside triphosphates as substrates.</text>
</comment>
<comment type="catalytic activity">
    <reaction evidence="1">
        <text>RNA(n) + a ribonucleoside 5'-triphosphate = RNA(n+1) + diphosphate</text>
        <dbReference type="Rhea" id="RHEA:21248"/>
        <dbReference type="Rhea" id="RHEA-COMP:14527"/>
        <dbReference type="Rhea" id="RHEA-COMP:17342"/>
        <dbReference type="ChEBI" id="CHEBI:33019"/>
        <dbReference type="ChEBI" id="CHEBI:61557"/>
        <dbReference type="ChEBI" id="CHEBI:140395"/>
        <dbReference type="EC" id="2.7.7.6"/>
    </reaction>
</comment>
<comment type="cofactor">
    <cofactor evidence="1">
        <name>Mg(2+)</name>
        <dbReference type="ChEBI" id="CHEBI:18420"/>
    </cofactor>
    <text evidence="1">Binds 1 Mg(2+) ion per subunit.</text>
</comment>
<comment type="cofactor">
    <cofactor evidence="1">
        <name>Zn(2+)</name>
        <dbReference type="ChEBI" id="CHEBI:29105"/>
    </cofactor>
    <text evidence="1">Binds 2 Zn(2+) ions per subunit.</text>
</comment>
<comment type="subunit">
    <text evidence="1">The RNAP catalytic core consists of 2 alpha, 1 beta, 1 beta' and 1 omega subunit. When a sigma factor is associated with the core the holoenzyme is formed, which can initiate transcription.</text>
</comment>
<comment type="similarity">
    <text evidence="1">Belongs to the RNA polymerase beta' chain family.</text>
</comment>